<sequence length="385" mass="43118">MKDVILIANAGSSSLKISIFEIQNKQVKDKIYNIFLEKNDNKILCYINKKQESATDIKDDAIEMMIDLFEDWWKKQENLNLIATGHRIVHGGKNFNKPVIVNEKVSEDLRVLIPLNPLHQPYNLQVLDLFLQKYKEIVHIACFDTSFHFTNPPITKAFGLPKKYYAKGIIRYGFHGLSYKYVSSHFKEMTKEDLPIKTIIAHLGSGSSLCAIKNGLSLTSSMGFSVLDGVMMGTRTGNIDPGIVLYLIDHEKMTTKEITELLYKKSGLLGISGESSDIRTLLASNSPDAKFAIDLFVYRIVLEIGKLTAALEGIDGLIFTAGVGQNSAVIREMISAKLSWLGIKIDDTKNQKNEHLISTESSKVKVFAVPTNEELIIAEEVIKFL</sequence>
<accession>A8GM71</accession>
<comment type="function">
    <text evidence="1">Catalyzes the formation of acetyl phosphate from acetate and ATP. Can also catalyze the reverse reaction.</text>
</comment>
<comment type="catalytic activity">
    <reaction evidence="1">
        <text>acetate + ATP = acetyl phosphate + ADP</text>
        <dbReference type="Rhea" id="RHEA:11352"/>
        <dbReference type="ChEBI" id="CHEBI:22191"/>
        <dbReference type="ChEBI" id="CHEBI:30089"/>
        <dbReference type="ChEBI" id="CHEBI:30616"/>
        <dbReference type="ChEBI" id="CHEBI:456216"/>
        <dbReference type="EC" id="2.7.2.1"/>
    </reaction>
</comment>
<comment type="cofactor">
    <cofactor evidence="1">
        <name>Mg(2+)</name>
        <dbReference type="ChEBI" id="CHEBI:18420"/>
    </cofactor>
    <cofactor evidence="1">
        <name>Mn(2+)</name>
        <dbReference type="ChEBI" id="CHEBI:29035"/>
    </cofactor>
    <text evidence="1">Mg(2+). Can also accept Mn(2+).</text>
</comment>
<comment type="pathway">
    <text evidence="1">Metabolic intermediate biosynthesis; acetyl-CoA biosynthesis; acetyl-CoA from acetate: step 1/2.</text>
</comment>
<comment type="subunit">
    <text evidence="1">Homodimer.</text>
</comment>
<comment type="subcellular location">
    <subcellularLocation>
        <location evidence="1">Cytoplasm</location>
    </subcellularLocation>
</comment>
<comment type="similarity">
    <text evidence="1">Belongs to the acetokinase family.</text>
</comment>
<reference key="1">
    <citation type="submission" date="2007-09" db="EMBL/GenBank/DDBJ databases">
        <title>Complete genome sequence of Rickettsia akari.</title>
        <authorList>
            <person name="Madan A."/>
            <person name="Fahey J."/>
            <person name="Helton E."/>
            <person name="Ketteman M."/>
            <person name="Madan A."/>
            <person name="Rodrigues S."/>
            <person name="Sanchez A."/>
            <person name="Whiting M."/>
            <person name="Dasch G."/>
            <person name="Eremeeva M."/>
        </authorList>
    </citation>
    <scope>NUCLEOTIDE SEQUENCE [LARGE SCALE GENOMIC DNA]</scope>
    <source>
        <strain>Hartford</strain>
    </source>
</reference>
<evidence type="ECO:0000255" key="1">
    <source>
        <dbReference type="HAMAP-Rule" id="MF_00020"/>
    </source>
</evidence>
<gene>
    <name evidence="1" type="primary">ackA</name>
    <name type="ordered locus">A1C_00830</name>
</gene>
<name>ACKA_RICAH</name>
<dbReference type="EC" id="2.7.2.1" evidence="1"/>
<dbReference type="EMBL" id="CP000847">
    <property type="protein sequence ID" value="ABV74496.1"/>
    <property type="molecule type" value="Genomic_DNA"/>
</dbReference>
<dbReference type="RefSeq" id="WP_012013366.1">
    <property type="nucleotide sequence ID" value="NC_009881.1"/>
</dbReference>
<dbReference type="SMR" id="A8GM71"/>
<dbReference type="STRING" id="293614.A1C_00830"/>
<dbReference type="KEGG" id="rak:A1C_00830"/>
<dbReference type="eggNOG" id="COG0282">
    <property type="taxonomic scope" value="Bacteria"/>
</dbReference>
<dbReference type="HOGENOM" id="CLU_020352_0_0_5"/>
<dbReference type="UniPathway" id="UPA00340">
    <property type="reaction ID" value="UER00458"/>
</dbReference>
<dbReference type="Proteomes" id="UP000006830">
    <property type="component" value="Chromosome"/>
</dbReference>
<dbReference type="GO" id="GO:0005737">
    <property type="term" value="C:cytoplasm"/>
    <property type="evidence" value="ECO:0007669"/>
    <property type="project" value="UniProtKB-SubCell"/>
</dbReference>
<dbReference type="GO" id="GO:0008776">
    <property type="term" value="F:acetate kinase activity"/>
    <property type="evidence" value="ECO:0007669"/>
    <property type="project" value="UniProtKB-UniRule"/>
</dbReference>
<dbReference type="GO" id="GO:0005524">
    <property type="term" value="F:ATP binding"/>
    <property type="evidence" value="ECO:0007669"/>
    <property type="project" value="UniProtKB-KW"/>
</dbReference>
<dbReference type="GO" id="GO:0000287">
    <property type="term" value="F:magnesium ion binding"/>
    <property type="evidence" value="ECO:0007669"/>
    <property type="project" value="UniProtKB-UniRule"/>
</dbReference>
<dbReference type="GO" id="GO:0006083">
    <property type="term" value="P:acetate metabolic process"/>
    <property type="evidence" value="ECO:0007669"/>
    <property type="project" value="TreeGrafter"/>
</dbReference>
<dbReference type="GO" id="GO:0006085">
    <property type="term" value="P:acetyl-CoA biosynthetic process"/>
    <property type="evidence" value="ECO:0007669"/>
    <property type="project" value="UniProtKB-UniRule"/>
</dbReference>
<dbReference type="Gene3D" id="3.30.420.40">
    <property type="match status" value="2"/>
</dbReference>
<dbReference type="HAMAP" id="MF_00020">
    <property type="entry name" value="Acetate_kinase"/>
    <property type="match status" value="1"/>
</dbReference>
<dbReference type="InterPro" id="IPR004372">
    <property type="entry name" value="Ac/propionate_kinase"/>
</dbReference>
<dbReference type="InterPro" id="IPR000890">
    <property type="entry name" value="Aliphatic_acid_kin_short-chain"/>
</dbReference>
<dbReference type="InterPro" id="IPR023865">
    <property type="entry name" value="Aliphatic_acid_kinase_CS"/>
</dbReference>
<dbReference type="InterPro" id="IPR043129">
    <property type="entry name" value="ATPase_NBD"/>
</dbReference>
<dbReference type="NCBIfam" id="TIGR00016">
    <property type="entry name" value="ackA"/>
    <property type="match status" value="1"/>
</dbReference>
<dbReference type="PANTHER" id="PTHR21060">
    <property type="entry name" value="ACETATE KINASE"/>
    <property type="match status" value="1"/>
</dbReference>
<dbReference type="PANTHER" id="PTHR21060:SF15">
    <property type="entry name" value="ACETATE KINASE-RELATED"/>
    <property type="match status" value="1"/>
</dbReference>
<dbReference type="Pfam" id="PF00871">
    <property type="entry name" value="Acetate_kinase"/>
    <property type="match status" value="1"/>
</dbReference>
<dbReference type="PIRSF" id="PIRSF000722">
    <property type="entry name" value="Acetate_prop_kin"/>
    <property type="match status" value="1"/>
</dbReference>
<dbReference type="PRINTS" id="PR00471">
    <property type="entry name" value="ACETATEKNASE"/>
</dbReference>
<dbReference type="SUPFAM" id="SSF53067">
    <property type="entry name" value="Actin-like ATPase domain"/>
    <property type="match status" value="2"/>
</dbReference>
<dbReference type="PROSITE" id="PS01075">
    <property type="entry name" value="ACETATE_KINASE_1"/>
    <property type="match status" value="1"/>
</dbReference>
<dbReference type="PROSITE" id="PS01076">
    <property type="entry name" value="ACETATE_KINASE_2"/>
    <property type="match status" value="1"/>
</dbReference>
<organism>
    <name type="scientific">Rickettsia akari (strain Hartford)</name>
    <dbReference type="NCBI Taxonomy" id="293614"/>
    <lineage>
        <taxon>Bacteria</taxon>
        <taxon>Pseudomonadati</taxon>
        <taxon>Pseudomonadota</taxon>
        <taxon>Alphaproteobacteria</taxon>
        <taxon>Rickettsiales</taxon>
        <taxon>Rickettsiaceae</taxon>
        <taxon>Rickettsieae</taxon>
        <taxon>Rickettsia</taxon>
        <taxon>spotted fever group</taxon>
    </lineage>
</organism>
<protein>
    <recommendedName>
        <fullName evidence="1">Acetate kinase</fullName>
        <ecNumber evidence="1">2.7.2.1</ecNumber>
    </recommendedName>
    <alternativeName>
        <fullName evidence="1">Acetokinase</fullName>
    </alternativeName>
</protein>
<proteinExistence type="inferred from homology"/>
<feature type="chain" id="PRO_1000002250" description="Acetate kinase">
    <location>
        <begin position="1"/>
        <end position="385"/>
    </location>
</feature>
<feature type="active site" description="Proton donor/acceptor" evidence="1">
    <location>
        <position position="144"/>
    </location>
</feature>
<feature type="binding site" evidence="1">
    <location>
        <position position="9"/>
    </location>
    <ligand>
        <name>Mg(2+)</name>
        <dbReference type="ChEBI" id="CHEBI:18420"/>
    </ligand>
</feature>
<feature type="binding site" evidence="1">
    <location>
        <position position="16"/>
    </location>
    <ligand>
        <name>ATP</name>
        <dbReference type="ChEBI" id="CHEBI:30616"/>
    </ligand>
</feature>
<feature type="binding site" evidence="1">
    <location>
        <position position="87"/>
    </location>
    <ligand>
        <name>substrate</name>
    </ligand>
</feature>
<feature type="binding site" evidence="1">
    <location>
        <begin position="202"/>
        <end position="206"/>
    </location>
    <ligand>
        <name>ATP</name>
        <dbReference type="ChEBI" id="CHEBI:30616"/>
    </ligand>
</feature>
<feature type="binding site" evidence="1">
    <location>
        <begin position="277"/>
        <end position="279"/>
    </location>
    <ligand>
        <name>ATP</name>
        <dbReference type="ChEBI" id="CHEBI:30616"/>
    </ligand>
</feature>
<feature type="binding site" evidence="1">
    <location>
        <position position="373"/>
    </location>
    <ligand>
        <name>Mg(2+)</name>
        <dbReference type="ChEBI" id="CHEBI:18420"/>
    </ligand>
</feature>
<feature type="site" description="Transition state stabilizer" evidence="1">
    <location>
        <position position="175"/>
    </location>
</feature>
<feature type="site" description="Transition state stabilizer" evidence="1">
    <location>
        <position position="235"/>
    </location>
</feature>
<keyword id="KW-0067">ATP-binding</keyword>
<keyword id="KW-0963">Cytoplasm</keyword>
<keyword id="KW-0418">Kinase</keyword>
<keyword id="KW-0460">Magnesium</keyword>
<keyword id="KW-0479">Metal-binding</keyword>
<keyword id="KW-0547">Nucleotide-binding</keyword>
<keyword id="KW-0808">Transferase</keyword>